<accession>B1X972</accession>
<comment type="similarity">
    <text evidence="1">Belongs to the UPF0758 family. YicR subfamily.</text>
</comment>
<feature type="chain" id="PRO_1000089815" description="UPF0758 protein YicR">
    <location>
        <begin position="1"/>
        <end position="222"/>
    </location>
</feature>
<feature type="domain" description="MPN" evidence="2">
    <location>
        <begin position="100"/>
        <end position="222"/>
    </location>
</feature>
<feature type="short sequence motif" description="JAMM motif" evidence="2">
    <location>
        <begin position="171"/>
        <end position="184"/>
    </location>
</feature>
<feature type="binding site" evidence="2">
    <location>
        <position position="171"/>
    </location>
    <ligand>
        <name>Zn(2+)</name>
        <dbReference type="ChEBI" id="CHEBI:29105"/>
        <note>catalytic</note>
    </ligand>
</feature>
<feature type="binding site" evidence="2">
    <location>
        <position position="173"/>
    </location>
    <ligand>
        <name>Zn(2+)</name>
        <dbReference type="ChEBI" id="CHEBI:29105"/>
        <note>catalytic</note>
    </ligand>
</feature>
<feature type="binding site" evidence="2">
    <location>
        <position position="184"/>
    </location>
    <ligand>
        <name>Zn(2+)</name>
        <dbReference type="ChEBI" id="CHEBI:29105"/>
        <note>catalytic</note>
    </ligand>
</feature>
<organism>
    <name type="scientific">Escherichia coli (strain K12 / DH10B)</name>
    <dbReference type="NCBI Taxonomy" id="316385"/>
    <lineage>
        <taxon>Bacteria</taxon>
        <taxon>Pseudomonadati</taxon>
        <taxon>Pseudomonadota</taxon>
        <taxon>Gammaproteobacteria</taxon>
        <taxon>Enterobacterales</taxon>
        <taxon>Enterobacteriaceae</taxon>
        <taxon>Escherichia</taxon>
    </lineage>
</organism>
<dbReference type="EMBL" id="CP000948">
    <property type="protein sequence ID" value="ACB04688.1"/>
    <property type="molecule type" value="Genomic_DNA"/>
</dbReference>
<dbReference type="SMR" id="B1X972"/>
<dbReference type="KEGG" id="ecd:ECDH10B_3820"/>
<dbReference type="HOGENOM" id="CLU_073529_0_1_6"/>
<dbReference type="GO" id="GO:0046872">
    <property type="term" value="F:metal ion binding"/>
    <property type="evidence" value="ECO:0007669"/>
    <property type="project" value="UniProtKB-KW"/>
</dbReference>
<dbReference type="GO" id="GO:0008237">
    <property type="term" value="F:metallopeptidase activity"/>
    <property type="evidence" value="ECO:0007669"/>
    <property type="project" value="UniProtKB-KW"/>
</dbReference>
<dbReference type="GO" id="GO:0006508">
    <property type="term" value="P:proteolysis"/>
    <property type="evidence" value="ECO:0007669"/>
    <property type="project" value="UniProtKB-KW"/>
</dbReference>
<dbReference type="CDD" id="cd08071">
    <property type="entry name" value="MPN_DUF2466"/>
    <property type="match status" value="1"/>
</dbReference>
<dbReference type="Gene3D" id="3.40.140.10">
    <property type="entry name" value="Cytidine Deaminase, domain 2"/>
    <property type="match status" value="1"/>
</dbReference>
<dbReference type="HAMAP" id="MF_00018">
    <property type="entry name" value="UPF0758_YicR"/>
    <property type="match status" value="1"/>
</dbReference>
<dbReference type="InterPro" id="IPR037518">
    <property type="entry name" value="MPN"/>
</dbReference>
<dbReference type="InterPro" id="IPR025657">
    <property type="entry name" value="RadC_JAB"/>
</dbReference>
<dbReference type="InterPro" id="IPR010994">
    <property type="entry name" value="RuvA_2-like"/>
</dbReference>
<dbReference type="InterPro" id="IPR001405">
    <property type="entry name" value="UPF0758"/>
</dbReference>
<dbReference type="InterPro" id="IPR020891">
    <property type="entry name" value="UPF0758_CS"/>
</dbReference>
<dbReference type="InterPro" id="IPR046778">
    <property type="entry name" value="UPF0758_N"/>
</dbReference>
<dbReference type="InterPro" id="IPR022820">
    <property type="entry name" value="UPF0758_YicR"/>
</dbReference>
<dbReference type="NCBIfam" id="NF000642">
    <property type="entry name" value="PRK00024.1"/>
    <property type="match status" value="1"/>
</dbReference>
<dbReference type="NCBIfam" id="TIGR00608">
    <property type="entry name" value="radc"/>
    <property type="match status" value="1"/>
</dbReference>
<dbReference type="PANTHER" id="PTHR30471">
    <property type="entry name" value="DNA REPAIR PROTEIN RADC"/>
    <property type="match status" value="1"/>
</dbReference>
<dbReference type="PANTHER" id="PTHR30471:SF3">
    <property type="entry name" value="UPF0758 PROTEIN YEES-RELATED"/>
    <property type="match status" value="1"/>
</dbReference>
<dbReference type="Pfam" id="PF04002">
    <property type="entry name" value="RadC"/>
    <property type="match status" value="1"/>
</dbReference>
<dbReference type="Pfam" id="PF20582">
    <property type="entry name" value="UPF0758_N"/>
    <property type="match status" value="1"/>
</dbReference>
<dbReference type="SUPFAM" id="SSF47781">
    <property type="entry name" value="RuvA domain 2-like"/>
    <property type="match status" value="1"/>
</dbReference>
<dbReference type="PROSITE" id="PS50249">
    <property type="entry name" value="MPN"/>
    <property type="match status" value="1"/>
</dbReference>
<dbReference type="PROSITE" id="PS01302">
    <property type="entry name" value="UPF0758"/>
    <property type="match status" value="1"/>
</dbReference>
<keyword id="KW-0378">Hydrolase</keyword>
<keyword id="KW-0479">Metal-binding</keyword>
<keyword id="KW-0482">Metalloprotease</keyword>
<keyword id="KW-0645">Protease</keyword>
<keyword id="KW-0862">Zinc</keyword>
<gene>
    <name evidence="1" type="primary">yicR</name>
    <name type="ordered locus">ECDH10B_3820</name>
</gene>
<name>YICR_ECODH</name>
<reference key="1">
    <citation type="journal article" date="2008" name="J. Bacteriol.">
        <title>The complete genome sequence of Escherichia coli DH10B: insights into the biology of a laboratory workhorse.</title>
        <authorList>
            <person name="Durfee T."/>
            <person name="Nelson R."/>
            <person name="Baldwin S."/>
            <person name="Plunkett G. III"/>
            <person name="Burland V."/>
            <person name="Mau B."/>
            <person name="Petrosino J.F."/>
            <person name="Qin X."/>
            <person name="Muzny D.M."/>
            <person name="Ayele M."/>
            <person name="Gibbs R.A."/>
            <person name="Csorgo B."/>
            <person name="Posfai G."/>
            <person name="Weinstock G.M."/>
            <person name="Blattner F.R."/>
        </authorList>
    </citation>
    <scope>NUCLEOTIDE SEQUENCE [LARGE SCALE GENOMIC DNA]</scope>
    <source>
        <strain>K12 / DH10B</strain>
    </source>
</reference>
<evidence type="ECO:0000255" key="1">
    <source>
        <dbReference type="HAMAP-Rule" id="MF_00018"/>
    </source>
</evidence>
<evidence type="ECO:0000255" key="2">
    <source>
        <dbReference type="PROSITE-ProRule" id="PRU01182"/>
    </source>
</evidence>
<sequence length="222" mass="25343">MKNNSQLLMPREKMLKFGISALTDVELLALFLRTGTRGKDVLTLAKEMLENFGSLYGLLTSEYEQFSGVHGIGVAKFAQLKGIAELARRYYNVRMREESPLLSPEMTREFLQSQLTGEEREIFMVIFLDSQHRVITHRRLFSGTLNHVEVHPREIIREAIKINASALILAHNHPSGCAEPSKADKLITERIIKSCQFMDLRVLDHIVIGRGEYVSFAERGWI</sequence>
<protein>
    <recommendedName>
        <fullName evidence="1">UPF0758 protein YicR</fullName>
    </recommendedName>
</protein>
<proteinExistence type="inferred from homology"/>